<accession>Q0BTX6</accession>
<proteinExistence type="inferred from homology"/>
<dbReference type="EC" id="6.3.4.2" evidence="1"/>
<dbReference type="EMBL" id="CP000394">
    <property type="protein sequence ID" value="ABI61726.1"/>
    <property type="molecule type" value="Genomic_DNA"/>
</dbReference>
<dbReference type="RefSeq" id="WP_011631535.1">
    <property type="nucleotide sequence ID" value="NC_008343.2"/>
</dbReference>
<dbReference type="SMR" id="Q0BTX6"/>
<dbReference type="STRING" id="391165.GbCGDNIH1_0828"/>
<dbReference type="MEROPS" id="C26.964"/>
<dbReference type="KEGG" id="gbe:GbCGDNIH1_0828"/>
<dbReference type="eggNOG" id="COG0504">
    <property type="taxonomic scope" value="Bacteria"/>
</dbReference>
<dbReference type="HOGENOM" id="CLU_011675_5_0_5"/>
<dbReference type="OrthoDB" id="9801107at2"/>
<dbReference type="UniPathway" id="UPA00159">
    <property type="reaction ID" value="UER00277"/>
</dbReference>
<dbReference type="Proteomes" id="UP000001963">
    <property type="component" value="Chromosome"/>
</dbReference>
<dbReference type="GO" id="GO:0005829">
    <property type="term" value="C:cytosol"/>
    <property type="evidence" value="ECO:0007669"/>
    <property type="project" value="TreeGrafter"/>
</dbReference>
<dbReference type="GO" id="GO:0005524">
    <property type="term" value="F:ATP binding"/>
    <property type="evidence" value="ECO:0007669"/>
    <property type="project" value="UniProtKB-KW"/>
</dbReference>
<dbReference type="GO" id="GO:0003883">
    <property type="term" value="F:CTP synthase activity"/>
    <property type="evidence" value="ECO:0007669"/>
    <property type="project" value="UniProtKB-UniRule"/>
</dbReference>
<dbReference type="GO" id="GO:0004359">
    <property type="term" value="F:glutaminase activity"/>
    <property type="evidence" value="ECO:0007669"/>
    <property type="project" value="RHEA"/>
</dbReference>
<dbReference type="GO" id="GO:0042802">
    <property type="term" value="F:identical protein binding"/>
    <property type="evidence" value="ECO:0007669"/>
    <property type="project" value="TreeGrafter"/>
</dbReference>
<dbReference type="GO" id="GO:0046872">
    <property type="term" value="F:metal ion binding"/>
    <property type="evidence" value="ECO:0007669"/>
    <property type="project" value="UniProtKB-KW"/>
</dbReference>
<dbReference type="GO" id="GO:0044210">
    <property type="term" value="P:'de novo' CTP biosynthetic process"/>
    <property type="evidence" value="ECO:0007669"/>
    <property type="project" value="UniProtKB-UniRule"/>
</dbReference>
<dbReference type="GO" id="GO:0019856">
    <property type="term" value="P:pyrimidine nucleobase biosynthetic process"/>
    <property type="evidence" value="ECO:0007669"/>
    <property type="project" value="TreeGrafter"/>
</dbReference>
<dbReference type="CDD" id="cd03113">
    <property type="entry name" value="CTPS_N"/>
    <property type="match status" value="1"/>
</dbReference>
<dbReference type="CDD" id="cd01746">
    <property type="entry name" value="GATase1_CTP_Synthase"/>
    <property type="match status" value="1"/>
</dbReference>
<dbReference type="FunFam" id="3.40.50.300:FF:000009">
    <property type="entry name" value="CTP synthase"/>
    <property type="match status" value="1"/>
</dbReference>
<dbReference type="FunFam" id="3.40.50.880:FF:000002">
    <property type="entry name" value="CTP synthase"/>
    <property type="match status" value="1"/>
</dbReference>
<dbReference type="Gene3D" id="3.40.50.880">
    <property type="match status" value="1"/>
</dbReference>
<dbReference type="Gene3D" id="3.40.50.300">
    <property type="entry name" value="P-loop containing nucleotide triphosphate hydrolases"/>
    <property type="match status" value="1"/>
</dbReference>
<dbReference type="HAMAP" id="MF_01227">
    <property type="entry name" value="PyrG"/>
    <property type="match status" value="1"/>
</dbReference>
<dbReference type="InterPro" id="IPR029062">
    <property type="entry name" value="Class_I_gatase-like"/>
</dbReference>
<dbReference type="InterPro" id="IPR004468">
    <property type="entry name" value="CTP_synthase"/>
</dbReference>
<dbReference type="InterPro" id="IPR017456">
    <property type="entry name" value="CTP_synthase_N"/>
</dbReference>
<dbReference type="InterPro" id="IPR017926">
    <property type="entry name" value="GATASE"/>
</dbReference>
<dbReference type="InterPro" id="IPR033828">
    <property type="entry name" value="GATase1_CTP_Synthase"/>
</dbReference>
<dbReference type="InterPro" id="IPR027417">
    <property type="entry name" value="P-loop_NTPase"/>
</dbReference>
<dbReference type="NCBIfam" id="NF003792">
    <property type="entry name" value="PRK05380.1"/>
    <property type="match status" value="1"/>
</dbReference>
<dbReference type="NCBIfam" id="TIGR00337">
    <property type="entry name" value="PyrG"/>
    <property type="match status" value="1"/>
</dbReference>
<dbReference type="PANTHER" id="PTHR11550">
    <property type="entry name" value="CTP SYNTHASE"/>
    <property type="match status" value="1"/>
</dbReference>
<dbReference type="PANTHER" id="PTHR11550:SF0">
    <property type="entry name" value="CTP SYNTHASE-RELATED"/>
    <property type="match status" value="1"/>
</dbReference>
<dbReference type="Pfam" id="PF06418">
    <property type="entry name" value="CTP_synth_N"/>
    <property type="match status" value="1"/>
</dbReference>
<dbReference type="Pfam" id="PF00117">
    <property type="entry name" value="GATase"/>
    <property type="match status" value="1"/>
</dbReference>
<dbReference type="SUPFAM" id="SSF52317">
    <property type="entry name" value="Class I glutamine amidotransferase-like"/>
    <property type="match status" value="1"/>
</dbReference>
<dbReference type="SUPFAM" id="SSF52540">
    <property type="entry name" value="P-loop containing nucleoside triphosphate hydrolases"/>
    <property type="match status" value="1"/>
</dbReference>
<dbReference type="PROSITE" id="PS51273">
    <property type="entry name" value="GATASE_TYPE_1"/>
    <property type="match status" value="1"/>
</dbReference>
<reference key="1">
    <citation type="journal article" date="2007" name="J. Bacteriol.">
        <title>Genome sequence analysis of the emerging human pathogenic acetic acid bacterium Granulibacter bethesdensis.</title>
        <authorList>
            <person name="Greenberg D.E."/>
            <person name="Porcella S.F."/>
            <person name="Zelazny A.M."/>
            <person name="Virtaneva K."/>
            <person name="Sturdevant D.E."/>
            <person name="Kupko J.J. III"/>
            <person name="Barbian K.D."/>
            <person name="Babar A."/>
            <person name="Dorward D.W."/>
            <person name="Holland S.M."/>
        </authorList>
    </citation>
    <scope>NUCLEOTIDE SEQUENCE [LARGE SCALE GENOMIC DNA]</scope>
    <source>
        <strain>ATCC BAA-1260 / CGDNIH1</strain>
    </source>
</reference>
<protein>
    <recommendedName>
        <fullName evidence="1">CTP synthase</fullName>
        <ecNumber evidence="1">6.3.4.2</ecNumber>
    </recommendedName>
    <alternativeName>
        <fullName evidence="1">Cytidine 5'-triphosphate synthase</fullName>
    </alternativeName>
    <alternativeName>
        <fullName evidence="1">Cytidine triphosphate synthetase</fullName>
        <shortName evidence="1">CTP synthetase</shortName>
        <shortName evidence="1">CTPS</shortName>
    </alternativeName>
    <alternativeName>
        <fullName evidence="1">UTP--ammonia ligase</fullName>
    </alternativeName>
</protein>
<comment type="function">
    <text evidence="1">Catalyzes the ATP-dependent amination of UTP to CTP with either L-glutamine or ammonia as the source of nitrogen. Regulates intracellular CTP levels through interactions with the four ribonucleotide triphosphates.</text>
</comment>
<comment type="catalytic activity">
    <reaction evidence="1">
        <text>UTP + L-glutamine + ATP + H2O = CTP + L-glutamate + ADP + phosphate + 2 H(+)</text>
        <dbReference type="Rhea" id="RHEA:26426"/>
        <dbReference type="ChEBI" id="CHEBI:15377"/>
        <dbReference type="ChEBI" id="CHEBI:15378"/>
        <dbReference type="ChEBI" id="CHEBI:29985"/>
        <dbReference type="ChEBI" id="CHEBI:30616"/>
        <dbReference type="ChEBI" id="CHEBI:37563"/>
        <dbReference type="ChEBI" id="CHEBI:43474"/>
        <dbReference type="ChEBI" id="CHEBI:46398"/>
        <dbReference type="ChEBI" id="CHEBI:58359"/>
        <dbReference type="ChEBI" id="CHEBI:456216"/>
        <dbReference type="EC" id="6.3.4.2"/>
    </reaction>
</comment>
<comment type="catalytic activity">
    <reaction evidence="1">
        <text>L-glutamine + H2O = L-glutamate + NH4(+)</text>
        <dbReference type="Rhea" id="RHEA:15889"/>
        <dbReference type="ChEBI" id="CHEBI:15377"/>
        <dbReference type="ChEBI" id="CHEBI:28938"/>
        <dbReference type="ChEBI" id="CHEBI:29985"/>
        <dbReference type="ChEBI" id="CHEBI:58359"/>
    </reaction>
</comment>
<comment type="catalytic activity">
    <reaction evidence="1">
        <text>UTP + NH4(+) + ATP = CTP + ADP + phosphate + 2 H(+)</text>
        <dbReference type="Rhea" id="RHEA:16597"/>
        <dbReference type="ChEBI" id="CHEBI:15378"/>
        <dbReference type="ChEBI" id="CHEBI:28938"/>
        <dbReference type="ChEBI" id="CHEBI:30616"/>
        <dbReference type="ChEBI" id="CHEBI:37563"/>
        <dbReference type="ChEBI" id="CHEBI:43474"/>
        <dbReference type="ChEBI" id="CHEBI:46398"/>
        <dbReference type="ChEBI" id="CHEBI:456216"/>
    </reaction>
</comment>
<comment type="activity regulation">
    <text evidence="1">Allosterically activated by GTP, when glutamine is the substrate; GTP has no effect on the reaction when ammonia is the substrate. The allosteric effector GTP functions by stabilizing the protein conformation that binds the tetrahedral intermediate(s) formed during glutamine hydrolysis. Inhibited by the product CTP, via allosteric rather than competitive inhibition.</text>
</comment>
<comment type="pathway">
    <text evidence="1">Pyrimidine metabolism; CTP biosynthesis via de novo pathway; CTP from UDP: step 2/2.</text>
</comment>
<comment type="subunit">
    <text evidence="1">Homotetramer.</text>
</comment>
<comment type="miscellaneous">
    <text evidence="1">CTPSs have evolved a hybrid strategy for distinguishing between UTP and CTP. The overlapping regions of the product feedback inhibitory and substrate sites recognize a common feature in both compounds, the triphosphate moiety. To differentiate isosteric substrate and product pyrimidine rings, an additional pocket far from the expected kinase/ligase catalytic site, specifically recognizes the cytosine and ribose portions of the product inhibitor.</text>
</comment>
<comment type="similarity">
    <text evidence="1">Belongs to the CTP synthase family.</text>
</comment>
<feature type="chain" id="PRO_0000266129" description="CTP synthase">
    <location>
        <begin position="1"/>
        <end position="544"/>
    </location>
</feature>
<feature type="domain" description="Glutamine amidotransferase type-1" evidence="1">
    <location>
        <begin position="292"/>
        <end position="543"/>
    </location>
</feature>
<feature type="region of interest" description="Amidoligase domain" evidence="1">
    <location>
        <begin position="1"/>
        <end position="266"/>
    </location>
</feature>
<feature type="active site" description="Nucleophile; for glutamine hydrolysis" evidence="1">
    <location>
        <position position="381"/>
    </location>
</feature>
<feature type="active site" evidence="1">
    <location>
        <position position="516"/>
    </location>
</feature>
<feature type="active site" evidence="1">
    <location>
        <position position="518"/>
    </location>
</feature>
<feature type="binding site" evidence="1">
    <location>
        <position position="13"/>
    </location>
    <ligand>
        <name>CTP</name>
        <dbReference type="ChEBI" id="CHEBI:37563"/>
        <note>allosteric inhibitor</note>
    </ligand>
</feature>
<feature type="binding site" evidence="1">
    <location>
        <position position="13"/>
    </location>
    <ligand>
        <name>UTP</name>
        <dbReference type="ChEBI" id="CHEBI:46398"/>
    </ligand>
</feature>
<feature type="binding site" evidence="1">
    <location>
        <begin position="14"/>
        <end position="19"/>
    </location>
    <ligand>
        <name>ATP</name>
        <dbReference type="ChEBI" id="CHEBI:30616"/>
    </ligand>
</feature>
<feature type="binding site" evidence="1">
    <location>
        <position position="54"/>
    </location>
    <ligand>
        <name>L-glutamine</name>
        <dbReference type="ChEBI" id="CHEBI:58359"/>
    </ligand>
</feature>
<feature type="binding site" evidence="1">
    <location>
        <position position="71"/>
    </location>
    <ligand>
        <name>ATP</name>
        <dbReference type="ChEBI" id="CHEBI:30616"/>
    </ligand>
</feature>
<feature type="binding site" evidence="1">
    <location>
        <position position="71"/>
    </location>
    <ligand>
        <name>Mg(2+)</name>
        <dbReference type="ChEBI" id="CHEBI:18420"/>
    </ligand>
</feature>
<feature type="binding site" evidence="1">
    <location>
        <position position="140"/>
    </location>
    <ligand>
        <name>Mg(2+)</name>
        <dbReference type="ChEBI" id="CHEBI:18420"/>
    </ligand>
</feature>
<feature type="binding site" evidence="1">
    <location>
        <begin position="147"/>
        <end position="149"/>
    </location>
    <ligand>
        <name>CTP</name>
        <dbReference type="ChEBI" id="CHEBI:37563"/>
        <note>allosteric inhibitor</note>
    </ligand>
</feature>
<feature type="binding site" evidence="1">
    <location>
        <begin position="187"/>
        <end position="192"/>
    </location>
    <ligand>
        <name>CTP</name>
        <dbReference type="ChEBI" id="CHEBI:37563"/>
        <note>allosteric inhibitor</note>
    </ligand>
</feature>
<feature type="binding site" evidence="1">
    <location>
        <begin position="187"/>
        <end position="192"/>
    </location>
    <ligand>
        <name>UTP</name>
        <dbReference type="ChEBI" id="CHEBI:46398"/>
    </ligand>
</feature>
<feature type="binding site" evidence="1">
    <location>
        <position position="223"/>
    </location>
    <ligand>
        <name>CTP</name>
        <dbReference type="ChEBI" id="CHEBI:37563"/>
        <note>allosteric inhibitor</note>
    </ligand>
</feature>
<feature type="binding site" evidence="1">
    <location>
        <position position="223"/>
    </location>
    <ligand>
        <name>UTP</name>
        <dbReference type="ChEBI" id="CHEBI:46398"/>
    </ligand>
</feature>
<feature type="binding site" evidence="1">
    <location>
        <position position="354"/>
    </location>
    <ligand>
        <name>L-glutamine</name>
        <dbReference type="ChEBI" id="CHEBI:58359"/>
    </ligand>
</feature>
<feature type="binding site" evidence="1">
    <location>
        <begin position="382"/>
        <end position="385"/>
    </location>
    <ligand>
        <name>L-glutamine</name>
        <dbReference type="ChEBI" id="CHEBI:58359"/>
    </ligand>
</feature>
<feature type="binding site" evidence="1">
    <location>
        <position position="405"/>
    </location>
    <ligand>
        <name>L-glutamine</name>
        <dbReference type="ChEBI" id="CHEBI:58359"/>
    </ligand>
</feature>
<feature type="binding site" evidence="1">
    <location>
        <position position="471"/>
    </location>
    <ligand>
        <name>L-glutamine</name>
        <dbReference type="ChEBI" id="CHEBI:58359"/>
    </ligand>
</feature>
<keyword id="KW-0067">ATP-binding</keyword>
<keyword id="KW-0315">Glutamine amidotransferase</keyword>
<keyword id="KW-0436">Ligase</keyword>
<keyword id="KW-0460">Magnesium</keyword>
<keyword id="KW-0479">Metal-binding</keyword>
<keyword id="KW-0547">Nucleotide-binding</keyword>
<keyword id="KW-0665">Pyrimidine biosynthesis</keyword>
<keyword id="KW-1185">Reference proteome</keyword>
<organism>
    <name type="scientific">Granulibacter bethesdensis (strain ATCC BAA-1260 / CGDNIH1)</name>
    <dbReference type="NCBI Taxonomy" id="391165"/>
    <lineage>
        <taxon>Bacteria</taxon>
        <taxon>Pseudomonadati</taxon>
        <taxon>Pseudomonadota</taxon>
        <taxon>Alphaproteobacteria</taxon>
        <taxon>Acetobacterales</taxon>
        <taxon>Acetobacteraceae</taxon>
        <taxon>Granulibacter</taxon>
    </lineage>
</organism>
<sequence>MTRFVFITGGVVSSLGKGIASAALGALLQARGYSVRLRKLDPYLNVDPGTMSPYQHGEVFVTDDGAETDLDLGHYERFTGVHARKSDNATTGRIYSDVIARERRGDYLGATVQVIPHITDAIKDAVTRDLNQDLDFALIEIGGTVGDIESLPFLEAIRQLGNELGPSRTMFVHLTLVPYIPSAGELKTKPTQHSVKELQNVGIQPNMLLCRCDRLIPENERRKIANFCNVRQEAVVSALDVDTIYSVPIRYHEEGMDREVLRHFNLPIGGEPDLTRWREIADVVRAPDGVVKIAIVGKYITLLDSYKSLAEALVHGGIANRVKVEIDWVDSQIFEQADSVQRLEGVHGILVPGGFGERGAEGKIEAVRFAREHKVPFLGICFGMQMAVIEAARNLAGLPDASSTEFGPCEVPIVGLMTEWARGNDLERRSASGDLGGTMRLGSYPAALIEGSLARETYGGVPVVQERHRHRYEVNIHYREQLEAVGLRFSGLSPDGVLPEIVEYADHPWFVGVQYHPELKSKPFDPHPLFSGFVAAAVRQARLV</sequence>
<gene>
    <name evidence="1" type="primary">pyrG</name>
    <name type="ordered locus">GbCGDNIH1_0828</name>
</gene>
<evidence type="ECO:0000255" key="1">
    <source>
        <dbReference type="HAMAP-Rule" id="MF_01227"/>
    </source>
</evidence>
<name>PYRG_GRABC</name>